<evidence type="ECO:0000250" key="1"/>
<evidence type="ECO:0000255" key="2"/>
<evidence type="ECO:0000305" key="3"/>
<dbReference type="EMBL" id="EQ963476">
    <property type="protein sequence ID" value="EED52423.1"/>
    <property type="molecule type" value="Genomic_DNA"/>
</dbReference>
<dbReference type="RefSeq" id="XP_002377587.1">
    <property type="nucleotide sequence ID" value="XM_002377546.1"/>
</dbReference>
<dbReference type="SMR" id="B8NCF0"/>
<dbReference type="STRING" id="332952.B8NCF0"/>
<dbReference type="EnsemblFungi" id="EED52423">
    <property type="protein sequence ID" value="EED52423"/>
    <property type="gene ID" value="AFLA_041250"/>
</dbReference>
<dbReference type="VEuPathDB" id="FungiDB:AFLA_007689"/>
<dbReference type="eggNOG" id="ENOG502S6EF">
    <property type="taxonomic scope" value="Eukaryota"/>
</dbReference>
<dbReference type="HOGENOM" id="CLU_147114_2_0_1"/>
<dbReference type="OMA" id="KYKLRIH"/>
<dbReference type="GO" id="GO:0005759">
    <property type="term" value="C:mitochondrial matrix"/>
    <property type="evidence" value="ECO:0007669"/>
    <property type="project" value="UniProtKB-SubCell"/>
</dbReference>
<dbReference type="GO" id="GO:0044183">
    <property type="term" value="F:protein folding chaperone"/>
    <property type="evidence" value="ECO:0007669"/>
    <property type="project" value="TreeGrafter"/>
</dbReference>
<dbReference type="GO" id="GO:0034551">
    <property type="term" value="P:mitochondrial respiratory chain complex III assembly"/>
    <property type="evidence" value="ECO:0007669"/>
    <property type="project" value="InterPro"/>
</dbReference>
<dbReference type="CDD" id="cd20267">
    <property type="entry name" value="Complex1_LYR_LYRM7"/>
    <property type="match status" value="1"/>
</dbReference>
<dbReference type="InterPro" id="IPR045298">
    <property type="entry name" value="Complex1_LYR_LYRM7"/>
</dbReference>
<dbReference type="InterPro" id="IPR050435">
    <property type="entry name" value="MZM1/LYRM7"/>
</dbReference>
<dbReference type="PANTHER" id="PTHR46749">
    <property type="entry name" value="COMPLEX III ASSEMBLY FACTOR LYRM7"/>
    <property type="match status" value="1"/>
</dbReference>
<dbReference type="PANTHER" id="PTHR46749:SF1">
    <property type="entry name" value="COMPLEX III ASSEMBLY FACTOR LYRM7"/>
    <property type="match status" value="1"/>
</dbReference>
<gene>
    <name type="primary">MZM1</name>
    <name type="ORF">AFLA_041250</name>
</gene>
<protein>
    <recommendedName>
        <fullName>Mitochondrial zinc maintenance protein 1, mitochondrial</fullName>
    </recommendedName>
</protein>
<name>MZM1_ASPFN</name>
<feature type="transit peptide" description="Mitochondrion" evidence="2">
    <location>
        <begin position="1"/>
        <end position="18"/>
    </location>
</feature>
<feature type="chain" id="PRO_0000405481" description="Mitochondrial zinc maintenance protein 1, mitochondrial">
    <location>
        <begin position="19"/>
        <end position="114"/>
    </location>
</feature>
<sequence>MTAPALSARGAYRQILRATRIAFHEDTRVLLAARQEARRQFDEHKRVGIDTPMQINHAIEVASILKHNIVQGVKLEGDEAAKWELRIHDDIERGDNDSIKHAGKDIKIHKACSA</sequence>
<reference key="1">
    <citation type="journal article" date="2015" name="Genome Announc.">
        <title>Genome sequence of Aspergillus flavus NRRL 3357, a strain that causes aflatoxin contamination of food and feed.</title>
        <authorList>
            <person name="Nierman W.C."/>
            <person name="Yu J."/>
            <person name="Fedorova-Abrams N.D."/>
            <person name="Losada L."/>
            <person name="Cleveland T.E."/>
            <person name="Bhatnagar D."/>
            <person name="Bennett J.W."/>
            <person name="Dean R."/>
            <person name="Payne G.A."/>
        </authorList>
    </citation>
    <scope>NUCLEOTIDE SEQUENCE [LARGE SCALE GENOMIC DNA]</scope>
    <source>
        <strain>ATCC 200026 / FGSC A1120 / IAM 13836 / NRRL 3357 / JCM 12722 / SRRC 167</strain>
    </source>
</reference>
<proteinExistence type="inferred from homology"/>
<comment type="function">
    <text evidence="1">Assembly factor required for Rieske Fe-S protein RIP1 incorporation into the cytochrome b-c1 (CIII) complex. Functions as a chaperone, binding to this subunit within the mitochondrial matrix and stabilizing it prior to its translocation and insertion into the late CIII dimeric intermediate within the mitochondrial inner membrane. Modulates the mitochondrial matrix zinc pool (By similarity).</text>
</comment>
<comment type="subunit">
    <text evidence="1">Interacts with RIP1.</text>
</comment>
<comment type="subcellular location">
    <subcellularLocation>
        <location evidence="1">Mitochondrion matrix</location>
    </subcellularLocation>
</comment>
<comment type="similarity">
    <text evidence="3">Belongs to the complex I LYR family. MZM1 subfamily.</text>
</comment>
<accession>B8NCF0</accession>
<organism>
    <name type="scientific">Aspergillus flavus (strain ATCC 200026 / FGSC A1120 / IAM 13836 / NRRL 3357 / JCM 12722 / SRRC 167)</name>
    <dbReference type="NCBI Taxonomy" id="332952"/>
    <lineage>
        <taxon>Eukaryota</taxon>
        <taxon>Fungi</taxon>
        <taxon>Dikarya</taxon>
        <taxon>Ascomycota</taxon>
        <taxon>Pezizomycotina</taxon>
        <taxon>Eurotiomycetes</taxon>
        <taxon>Eurotiomycetidae</taxon>
        <taxon>Eurotiales</taxon>
        <taxon>Aspergillaceae</taxon>
        <taxon>Aspergillus</taxon>
        <taxon>Aspergillus subgen. Circumdati</taxon>
    </lineage>
</organism>
<keyword id="KW-0143">Chaperone</keyword>
<keyword id="KW-0496">Mitochondrion</keyword>
<keyword id="KW-0809">Transit peptide</keyword>